<keyword id="KW-0030">Aminoacyl-tRNA synthetase</keyword>
<keyword id="KW-0067">ATP-binding</keyword>
<keyword id="KW-0963">Cytoplasm</keyword>
<keyword id="KW-0436">Ligase</keyword>
<keyword id="KW-0460">Magnesium</keyword>
<keyword id="KW-0479">Metal-binding</keyword>
<keyword id="KW-0547">Nucleotide-binding</keyword>
<keyword id="KW-0648">Protein biosynthesis</keyword>
<dbReference type="EC" id="6.1.1.20"/>
<dbReference type="EMBL" id="AJ391257">
    <property type="protein sequence ID" value="CAB72013.1"/>
    <property type="molecule type" value="Genomic_DNA"/>
</dbReference>
<dbReference type="EMBL" id="AL157959">
    <property type="protein sequence ID" value="CAM08160.1"/>
    <property type="molecule type" value="Genomic_DNA"/>
</dbReference>
<dbReference type="PIR" id="F81939">
    <property type="entry name" value="F81939"/>
</dbReference>
<dbReference type="RefSeq" id="WP_002246072.1">
    <property type="nucleotide sequence ID" value="NC_003116.1"/>
</dbReference>
<dbReference type="SMR" id="Q9JR76"/>
<dbReference type="EnsemblBacteria" id="CAM08160">
    <property type="protein sequence ID" value="CAM08160"/>
    <property type="gene ID" value="NMA0933"/>
</dbReference>
<dbReference type="GeneID" id="93386449"/>
<dbReference type="KEGG" id="nma:NMA0933"/>
<dbReference type="HOGENOM" id="CLU_025086_0_1_4"/>
<dbReference type="Proteomes" id="UP000000626">
    <property type="component" value="Chromosome"/>
</dbReference>
<dbReference type="GO" id="GO:0005737">
    <property type="term" value="C:cytoplasm"/>
    <property type="evidence" value="ECO:0007669"/>
    <property type="project" value="UniProtKB-SubCell"/>
</dbReference>
<dbReference type="GO" id="GO:0005524">
    <property type="term" value="F:ATP binding"/>
    <property type="evidence" value="ECO:0007669"/>
    <property type="project" value="UniProtKB-UniRule"/>
</dbReference>
<dbReference type="GO" id="GO:0000287">
    <property type="term" value="F:magnesium ion binding"/>
    <property type="evidence" value="ECO:0007669"/>
    <property type="project" value="UniProtKB-UniRule"/>
</dbReference>
<dbReference type="GO" id="GO:0004826">
    <property type="term" value="F:phenylalanine-tRNA ligase activity"/>
    <property type="evidence" value="ECO:0007669"/>
    <property type="project" value="UniProtKB-UniRule"/>
</dbReference>
<dbReference type="GO" id="GO:0000049">
    <property type="term" value="F:tRNA binding"/>
    <property type="evidence" value="ECO:0007669"/>
    <property type="project" value="InterPro"/>
</dbReference>
<dbReference type="GO" id="GO:0006432">
    <property type="term" value="P:phenylalanyl-tRNA aminoacylation"/>
    <property type="evidence" value="ECO:0007669"/>
    <property type="project" value="UniProtKB-UniRule"/>
</dbReference>
<dbReference type="CDD" id="cd00496">
    <property type="entry name" value="PheRS_alpha_core"/>
    <property type="match status" value="1"/>
</dbReference>
<dbReference type="FunFam" id="3.30.930.10:FF:000003">
    <property type="entry name" value="Phenylalanine--tRNA ligase alpha subunit"/>
    <property type="match status" value="1"/>
</dbReference>
<dbReference type="Gene3D" id="3.30.930.10">
    <property type="entry name" value="Bira Bifunctional Protein, Domain 2"/>
    <property type="match status" value="1"/>
</dbReference>
<dbReference type="HAMAP" id="MF_00281">
    <property type="entry name" value="Phe_tRNA_synth_alpha1"/>
    <property type="match status" value="1"/>
</dbReference>
<dbReference type="InterPro" id="IPR006195">
    <property type="entry name" value="aa-tRNA-synth_II"/>
</dbReference>
<dbReference type="InterPro" id="IPR045864">
    <property type="entry name" value="aa-tRNA-synth_II/BPL/LPL"/>
</dbReference>
<dbReference type="InterPro" id="IPR004529">
    <property type="entry name" value="Phe-tRNA-synth_IIc_asu"/>
</dbReference>
<dbReference type="InterPro" id="IPR004188">
    <property type="entry name" value="Phe-tRNA_ligase_II_N"/>
</dbReference>
<dbReference type="InterPro" id="IPR022911">
    <property type="entry name" value="Phe_tRNA_ligase_alpha1_bac"/>
</dbReference>
<dbReference type="InterPro" id="IPR002319">
    <property type="entry name" value="Phenylalanyl-tRNA_Synthase"/>
</dbReference>
<dbReference type="InterPro" id="IPR010978">
    <property type="entry name" value="tRNA-bd_arm"/>
</dbReference>
<dbReference type="NCBIfam" id="TIGR00468">
    <property type="entry name" value="pheS"/>
    <property type="match status" value="1"/>
</dbReference>
<dbReference type="PANTHER" id="PTHR11538:SF41">
    <property type="entry name" value="PHENYLALANINE--TRNA LIGASE, MITOCHONDRIAL"/>
    <property type="match status" value="1"/>
</dbReference>
<dbReference type="PANTHER" id="PTHR11538">
    <property type="entry name" value="PHENYLALANYL-TRNA SYNTHETASE"/>
    <property type="match status" value="1"/>
</dbReference>
<dbReference type="Pfam" id="PF02912">
    <property type="entry name" value="Phe_tRNA-synt_N"/>
    <property type="match status" value="1"/>
</dbReference>
<dbReference type="Pfam" id="PF01409">
    <property type="entry name" value="tRNA-synt_2d"/>
    <property type="match status" value="1"/>
</dbReference>
<dbReference type="SUPFAM" id="SSF55681">
    <property type="entry name" value="Class II aaRS and biotin synthetases"/>
    <property type="match status" value="1"/>
</dbReference>
<dbReference type="SUPFAM" id="SSF46589">
    <property type="entry name" value="tRNA-binding arm"/>
    <property type="match status" value="1"/>
</dbReference>
<dbReference type="PROSITE" id="PS50862">
    <property type="entry name" value="AA_TRNA_LIGASE_II"/>
    <property type="match status" value="1"/>
</dbReference>
<evidence type="ECO:0000250" key="1"/>
<evidence type="ECO:0000305" key="2"/>
<proteinExistence type="inferred from homology"/>
<reference key="1">
    <citation type="journal article" date="2000" name="Infect. Immun.">
        <title>Molecular and biological analysis of eight genetic islands that distinguish Neisseria meningitidis from the closely related pathogen Neisseria gonorrhoeae.</title>
        <authorList>
            <person name="Klee S.R."/>
            <person name="Nassif X."/>
            <person name="Kusecek B."/>
            <person name="Merker P."/>
            <person name="Beretti J.-L."/>
            <person name="Achtman M."/>
            <person name="Tinsley C.R."/>
        </authorList>
    </citation>
    <scope>NUCLEOTIDE SEQUENCE [GENOMIC DNA]</scope>
    <source>
        <strain>DSM 15465 / Z2491</strain>
    </source>
</reference>
<reference key="2">
    <citation type="journal article" date="2000" name="Nature">
        <title>Complete DNA sequence of a serogroup A strain of Neisseria meningitidis Z2491.</title>
        <authorList>
            <person name="Parkhill J."/>
            <person name="Achtman M."/>
            <person name="James K.D."/>
            <person name="Bentley S.D."/>
            <person name="Churcher C.M."/>
            <person name="Klee S.R."/>
            <person name="Morelli G."/>
            <person name="Basham D."/>
            <person name="Brown D."/>
            <person name="Chillingworth T."/>
            <person name="Davies R.M."/>
            <person name="Davis P."/>
            <person name="Devlin K."/>
            <person name="Feltwell T."/>
            <person name="Hamlin N."/>
            <person name="Holroyd S."/>
            <person name="Jagels K."/>
            <person name="Leather S."/>
            <person name="Moule S."/>
            <person name="Mungall K.L."/>
            <person name="Quail M.A."/>
            <person name="Rajandream M.A."/>
            <person name="Rutherford K.M."/>
            <person name="Simmonds M."/>
            <person name="Skelton J."/>
            <person name="Whitehead S."/>
            <person name="Spratt B.G."/>
            <person name="Barrell B.G."/>
        </authorList>
    </citation>
    <scope>NUCLEOTIDE SEQUENCE [LARGE SCALE GENOMIC DNA]</scope>
    <source>
        <strain>DSM 15465 / Z2491</strain>
    </source>
</reference>
<comment type="catalytic activity">
    <reaction>
        <text>tRNA(Phe) + L-phenylalanine + ATP = L-phenylalanyl-tRNA(Phe) + AMP + diphosphate + H(+)</text>
        <dbReference type="Rhea" id="RHEA:19413"/>
        <dbReference type="Rhea" id="RHEA-COMP:9668"/>
        <dbReference type="Rhea" id="RHEA-COMP:9699"/>
        <dbReference type="ChEBI" id="CHEBI:15378"/>
        <dbReference type="ChEBI" id="CHEBI:30616"/>
        <dbReference type="ChEBI" id="CHEBI:33019"/>
        <dbReference type="ChEBI" id="CHEBI:58095"/>
        <dbReference type="ChEBI" id="CHEBI:78442"/>
        <dbReference type="ChEBI" id="CHEBI:78531"/>
        <dbReference type="ChEBI" id="CHEBI:456215"/>
        <dbReference type="EC" id="6.1.1.20"/>
    </reaction>
</comment>
<comment type="cofactor">
    <cofactor evidence="1">
        <name>Mg(2+)</name>
        <dbReference type="ChEBI" id="CHEBI:18420"/>
    </cofactor>
    <text evidence="1">Binds 2 magnesium ions per tetramer.</text>
</comment>
<comment type="subunit">
    <text evidence="1">Tetramer of two alpha and two beta subunits.</text>
</comment>
<comment type="subcellular location">
    <subcellularLocation>
        <location evidence="1">Cytoplasm</location>
    </subcellularLocation>
</comment>
<comment type="similarity">
    <text evidence="2">Belongs to the class-II aminoacyl-tRNA synthetase family. Phe-tRNA synthetase alpha subunit type 1 subfamily.</text>
</comment>
<feature type="chain" id="PRO_0000126734" description="Phenylalanine--tRNA ligase alpha subunit">
    <location>
        <begin position="1"/>
        <end position="330"/>
    </location>
</feature>
<feature type="binding site" evidence="1">
    <location>
        <position position="254"/>
    </location>
    <ligand>
        <name>Mg(2+)</name>
        <dbReference type="ChEBI" id="CHEBI:18420"/>
        <note>shared with beta subunit</note>
    </ligand>
</feature>
<protein>
    <recommendedName>
        <fullName>Phenylalanine--tRNA ligase alpha subunit</fullName>
        <ecNumber>6.1.1.20</ecNumber>
    </recommendedName>
    <alternativeName>
        <fullName>Phenylalanyl-tRNA synthetase alpha subunit</fullName>
        <shortName>PheRS</shortName>
    </alternativeName>
</protein>
<accession>Q9JR76</accession>
<accession>A1IQX6</accession>
<organism>
    <name type="scientific">Neisseria meningitidis serogroup A / serotype 4A (strain DSM 15465 / Z2491)</name>
    <dbReference type="NCBI Taxonomy" id="122587"/>
    <lineage>
        <taxon>Bacteria</taxon>
        <taxon>Pseudomonadati</taxon>
        <taxon>Pseudomonadota</taxon>
        <taxon>Betaproteobacteria</taxon>
        <taxon>Neisseriales</taxon>
        <taxon>Neisseriaceae</taxon>
        <taxon>Neisseria</taxon>
    </lineage>
</organism>
<name>SYFA_NEIMA</name>
<sequence>MENVNRIVAEGIAAVEAAQDFNALEQIKARYLGKTGELTGLLKTLGQMSPEERKTIGAHINECKNRFQTAFNAKRDALNEAKLQARLAAEALDITLPGRAQEGGSLHPVTLTLQRVVELFHGMGFEVADGPEIEDDFHNFQALNIPANHPARAMQDTFYVENGDVLRTHTSPIQIRYMLDKKEPPVRIIAPGRVYRVDSDATHSPMFHQAEGLWVEEGVTFADLKAVFTDFIRRFFERDDLQVRFRPSFFPFTEPSAEIDIMGENGKWLEVGGCGMVHPNVLKNVNIDPEKYTGFAFGIGLDRFAMLRYNVNDLRLFFDNDLNFLKQFVK</sequence>
<gene>
    <name type="primary">pheS</name>
    <name type="ordered locus">NMA0933</name>
</gene>